<accession>Q17XR6</accession>
<feature type="chain" id="PRO_1000069770" description="7-cyano-7-deazaguanine synthase">
    <location>
        <begin position="1"/>
        <end position="225"/>
    </location>
</feature>
<feature type="binding site" evidence="1">
    <location>
        <begin position="10"/>
        <end position="20"/>
    </location>
    <ligand>
        <name>ATP</name>
        <dbReference type="ChEBI" id="CHEBI:30616"/>
    </ligand>
</feature>
<feature type="binding site" evidence="1">
    <location>
        <position position="190"/>
    </location>
    <ligand>
        <name>Zn(2+)</name>
        <dbReference type="ChEBI" id="CHEBI:29105"/>
    </ligand>
</feature>
<feature type="binding site" evidence="1">
    <location>
        <position position="205"/>
    </location>
    <ligand>
        <name>Zn(2+)</name>
        <dbReference type="ChEBI" id="CHEBI:29105"/>
    </ligand>
</feature>
<feature type="binding site" evidence="1">
    <location>
        <position position="208"/>
    </location>
    <ligand>
        <name>Zn(2+)</name>
        <dbReference type="ChEBI" id="CHEBI:29105"/>
    </ligand>
</feature>
<feature type="binding site" evidence="1">
    <location>
        <position position="211"/>
    </location>
    <ligand>
        <name>Zn(2+)</name>
        <dbReference type="ChEBI" id="CHEBI:29105"/>
    </ligand>
</feature>
<gene>
    <name evidence="1" type="primary">queC</name>
    <name type="ordered locus">Hac_0767</name>
</gene>
<comment type="function">
    <text evidence="1">Catalyzes the ATP-dependent conversion of 7-carboxy-7-deazaguanine (CDG) to 7-cyano-7-deazaguanine (preQ(0)).</text>
</comment>
<comment type="catalytic activity">
    <reaction evidence="1">
        <text>7-carboxy-7-deazaguanine + NH4(+) + ATP = 7-cyano-7-deazaguanine + ADP + phosphate + H2O + H(+)</text>
        <dbReference type="Rhea" id="RHEA:27982"/>
        <dbReference type="ChEBI" id="CHEBI:15377"/>
        <dbReference type="ChEBI" id="CHEBI:15378"/>
        <dbReference type="ChEBI" id="CHEBI:28938"/>
        <dbReference type="ChEBI" id="CHEBI:30616"/>
        <dbReference type="ChEBI" id="CHEBI:43474"/>
        <dbReference type="ChEBI" id="CHEBI:45075"/>
        <dbReference type="ChEBI" id="CHEBI:61036"/>
        <dbReference type="ChEBI" id="CHEBI:456216"/>
        <dbReference type="EC" id="6.3.4.20"/>
    </reaction>
</comment>
<comment type="cofactor">
    <cofactor evidence="1">
        <name>Zn(2+)</name>
        <dbReference type="ChEBI" id="CHEBI:29105"/>
    </cofactor>
    <text evidence="1">Binds 1 zinc ion per subunit.</text>
</comment>
<comment type="pathway">
    <text evidence="1">Purine metabolism; 7-cyano-7-deazaguanine biosynthesis.</text>
</comment>
<comment type="similarity">
    <text evidence="1">Belongs to the QueC family.</text>
</comment>
<reference key="1">
    <citation type="journal article" date="2006" name="PLoS Genet.">
        <title>Who ate whom? Adaptive Helicobacter genomic changes that accompanied a host jump from early humans to large felines.</title>
        <authorList>
            <person name="Eppinger M."/>
            <person name="Baar C."/>
            <person name="Linz B."/>
            <person name="Raddatz G."/>
            <person name="Lanz C."/>
            <person name="Keller H."/>
            <person name="Morelli G."/>
            <person name="Gressmann H."/>
            <person name="Achtman M."/>
            <person name="Schuster S.C."/>
        </authorList>
    </citation>
    <scope>NUCLEOTIDE SEQUENCE [LARGE SCALE GENOMIC DNA]</scope>
    <source>
        <strain>Sheeba</strain>
    </source>
</reference>
<protein>
    <recommendedName>
        <fullName evidence="1">7-cyano-7-deazaguanine synthase</fullName>
        <ecNumber evidence="1">6.3.4.20</ecNumber>
    </recommendedName>
    <alternativeName>
        <fullName evidence="1">7-cyano-7-carbaguanine synthase</fullName>
    </alternativeName>
    <alternativeName>
        <fullName evidence="1">PreQ(0) synthase</fullName>
    </alternativeName>
    <alternativeName>
        <fullName evidence="1">Queuosine biosynthesis protein QueC</fullName>
    </alternativeName>
</protein>
<keyword id="KW-0067">ATP-binding</keyword>
<keyword id="KW-0436">Ligase</keyword>
<keyword id="KW-0479">Metal-binding</keyword>
<keyword id="KW-0547">Nucleotide-binding</keyword>
<keyword id="KW-0671">Queuosine biosynthesis</keyword>
<keyword id="KW-0862">Zinc</keyword>
<name>QUEC_HELAH</name>
<proteinExistence type="inferred from homology"/>
<organism>
    <name type="scientific">Helicobacter acinonychis (strain Sheeba)</name>
    <dbReference type="NCBI Taxonomy" id="382638"/>
    <lineage>
        <taxon>Bacteria</taxon>
        <taxon>Pseudomonadati</taxon>
        <taxon>Campylobacterota</taxon>
        <taxon>Epsilonproteobacteria</taxon>
        <taxon>Campylobacterales</taxon>
        <taxon>Helicobacteraceae</taxon>
        <taxon>Helicobacter</taxon>
    </lineage>
</organism>
<dbReference type="EC" id="6.3.4.20" evidence="1"/>
<dbReference type="EMBL" id="AM260522">
    <property type="protein sequence ID" value="CAJ99560.1"/>
    <property type="molecule type" value="Genomic_DNA"/>
</dbReference>
<dbReference type="RefSeq" id="WP_011577673.1">
    <property type="nucleotide sequence ID" value="NC_008229.1"/>
</dbReference>
<dbReference type="SMR" id="Q17XR6"/>
<dbReference type="STRING" id="382638.Hac_0767"/>
<dbReference type="GeneID" id="31758196"/>
<dbReference type="KEGG" id="hac:Hac_0767"/>
<dbReference type="eggNOG" id="COG0603">
    <property type="taxonomic scope" value="Bacteria"/>
</dbReference>
<dbReference type="HOGENOM" id="CLU_081854_0_0_7"/>
<dbReference type="OrthoDB" id="9789567at2"/>
<dbReference type="BioCyc" id="HACI382638:HAC_RS03320-MONOMER"/>
<dbReference type="UniPathway" id="UPA00391"/>
<dbReference type="Proteomes" id="UP000000775">
    <property type="component" value="Chromosome"/>
</dbReference>
<dbReference type="GO" id="GO:0005524">
    <property type="term" value="F:ATP binding"/>
    <property type="evidence" value="ECO:0007669"/>
    <property type="project" value="UniProtKB-UniRule"/>
</dbReference>
<dbReference type="GO" id="GO:0016879">
    <property type="term" value="F:ligase activity, forming carbon-nitrogen bonds"/>
    <property type="evidence" value="ECO:0007669"/>
    <property type="project" value="UniProtKB-UniRule"/>
</dbReference>
<dbReference type="GO" id="GO:0008270">
    <property type="term" value="F:zinc ion binding"/>
    <property type="evidence" value="ECO:0007669"/>
    <property type="project" value="UniProtKB-UniRule"/>
</dbReference>
<dbReference type="GO" id="GO:0008616">
    <property type="term" value="P:queuosine biosynthetic process"/>
    <property type="evidence" value="ECO:0007669"/>
    <property type="project" value="UniProtKB-UniRule"/>
</dbReference>
<dbReference type="CDD" id="cd01995">
    <property type="entry name" value="QueC-like"/>
    <property type="match status" value="1"/>
</dbReference>
<dbReference type="Gene3D" id="3.40.50.620">
    <property type="entry name" value="HUPs"/>
    <property type="match status" value="1"/>
</dbReference>
<dbReference type="HAMAP" id="MF_01633">
    <property type="entry name" value="QueC"/>
    <property type="match status" value="1"/>
</dbReference>
<dbReference type="InterPro" id="IPR018317">
    <property type="entry name" value="QueC"/>
</dbReference>
<dbReference type="InterPro" id="IPR014729">
    <property type="entry name" value="Rossmann-like_a/b/a_fold"/>
</dbReference>
<dbReference type="NCBIfam" id="TIGR00364">
    <property type="entry name" value="7-cyano-7-deazaguanine synthase QueC"/>
    <property type="match status" value="1"/>
</dbReference>
<dbReference type="PANTHER" id="PTHR42914">
    <property type="entry name" value="7-CYANO-7-DEAZAGUANINE SYNTHASE"/>
    <property type="match status" value="1"/>
</dbReference>
<dbReference type="PANTHER" id="PTHR42914:SF1">
    <property type="entry name" value="7-CYANO-7-DEAZAGUANINE SYNTHASE"/>
    <property type="match status" value="1"/>
</dbReference>
<dbReference type="Pfam" id="PF06508">
    <property type="entry name" value="QueC"/>
    <property type="match status" value="1"/>
</dbReference>
<dbReference type="PIRSF" id="PIRSF006293">
    <property type="entry name" value="ExsB"/>
    <property type="match status" value="1"/>
</dbReference>
<dbReference type="SUPFAM" id="SSF52402">
    <property type="entry name" value="Adenine nucleotide alpha hydrolases-like"/>
    <property type="match status" value="1"/>
</dbReference>
<sequence>MGQEICVISFSGGQDSTTLAIWAAKRFKKVYLVGFDYAQKHSVELECAQKIASLLKLPYEIIQLDFLENITHSALFKNSNDLIGHSHVQNKDLPNSFVPNRNAIFITLLHSYAQKLGANNIALGVSQADFSGYPDCKEDFIKSIEHALNLGSNTTIKIVTPLMFLSKAQEFQMAKDLGALDLIIKETHTCYQGERKILHAYGYGCGECLACQLRKKGYEEFQARF</sequence>
<evidence type="ECO:0000255" key="1">
    <source>
        <dbReference type="HAMAP-Rule" id="MF_01633"/>
    </source>
</evidence>